<evidence type="ECO:0000250" key="1"/>
<evidence type="ECO:0000255" key="2"/>
<evidence type="ECO:0000255" key="3">
    <source>
        <dbReference type="PROSITE-ProRule" id="PRU00967"/>
    </source>
</evidence>
<evidence type="ECO:0000255" key="4">
    <source>
        <dbReference type="PROSITE-ProRule" id="PRU00968"/>
    </source>
</evidence>
<evidence type="ECO:0000305" key="5"/>
<keyword id="KW-1003">Cell membrane</keyword>
<keyword id="KW-0903">Direct protein sequencing</keyword>
<keyword id="KW-0249">Electron transport</keyword>
<keyword id="KW-0349">Heme</keyword>
<keyword id="KW-0408">Iron</keyword>
<keyword id="KW-0472">Membrane</keyword>
<keyword id="KW-0479">Metal-binding</keyword>
<keyword id="KW-0679">Respiratory chain</keyword>
<keyword id="KW-0812">Transmembrane</keyword>
<keyword id="KW-1133">Transmembrane helix</keyword>
<keyword id="KW-0813">Transport</keyword>
<organism>
    <name type="scientific">Rhodospirillum rubrum</name>
    <dbReference type="NCBI Taxonomy" id="1085"/>
    <lineage>
        <taxon>Bacteria</taxon>
        <taxon>Pseudomonadati</taxon>
        <taxon>Pseudomonadota</taxon>
        <taxon>Alphaproteobacteria</taxon>
        <taxon>Rhodospirillales</taxon>
        <taxon>Rhodospirillaceae</taxon>
        <taxon>Rhodospirillum</taxon>
    </lineage>
</organism>
<proteinExistence type="evidence at protein level"/>
<sequence>MYTPPRWNNKALKWFDERLPVLTVAHKELVVYPAPRNLNYFWNFGSLAGIAMIIMIATGIFLAMSYTAHVDHAFDSVERIMRDVNYGWLMRYMHANGASMFFIVVYVHMFRGLYYGSYKPPREVLWWLGLVILLLMMATAFMGYVLPWGQMSFWGATVITNLFSAIPVVGDDIVTLLWGGFSVDNPTLNRFFSLHYLFPMLLFAVVFLHMWALHVKKSNNPLGIDAKGPFDTIPFHPYYTVKDAFGLGIFLMVFCFFVFFAPNFFGEPDNYIPANPMVTPTHIVPEWYFLPFYAILRAVPDKLGGVLAMFGAILILFVLPWLDTSKVRSATFRPVFKGFFWVFLADCLLLGYLGAMPAEEPYVTITQLATIYYFLHFLVITPLVGWFEKPKPLPVSISSPVTTQA</sequence>
<comment type="function">
    <text evidence="1">Component of the ubiquinol-cytochrome c reductase complex (complex III or cytochrome b-c1 complex), which is a respiratory chain that generates an electrochemical potential coupled to ATP synthesis.</text>
</comment>
<comment type="cofactor">
    <cofactor evidence="1">
        <name>heme b</name>
        <dbReference type="ChEBI" id="CHEBI:60344"/>
    </cofactor>
    <text evidence="1">Binds 2 heme b groups non-covalently.</text>
</comment>
<comment type="subunit">
    <text evidence="1">The main subunits of complex b-c1 are: cytochrome b, cytochrome c1 and the Rieske protein.</text>
</comment>
<comment type="subcellular location">
    <subcellularLocation>
        <location evidence="5">Cell membrane</location>
        <topology evidence="5">Multi-pass membrane protein</topology>
    </subcellularLocation>
</comment>
<comment type="miscellaneous">
    <text evidence="1">Heme 1 (or BL or b562) is low-potential and absorbs at about 562 nm, and heme 2 (or BH or b566) is high-potential and absorbs at about 566 nm.</text>
</comment>
<comment type="similarity">
    <text evidence="3 4">Belongs to the cytochrome b family.</text>
</comment>
<reference key="1">
    <citation type="journal article" date="1990" name="Mol. Gen. Genet.">
        <title>The pet genes of Rhodospirillum rubrum: cloning and sequencing of the genes for the cytochrome bc1-complex.</title>
        <authorList>
            <person name="Majewski C."/>
            <person name="Trebst A."/>
        </authorList>
    </citation>
    <scope>NUCLEOTIDE SEQUENCE [GENOMIC DNA]</scope>
    <scope>PROTEIN SEQUENCE OF 1-27</scope>
    <source>
        <strain>FR1</strain>
    </source>
</reference>
<name>CYB_RHORU</name>
<accession>P23134</accession>
<gene>
    <name type="primary">petB</name>
</gene>
<feature type="chain" id="PRO_0000061773" description="Cytochrome b">
    <location>
        <begin position="1"/>
        <end position="405"/>
    </location>
</feature>
<feature type="transmembrane region" description="Helical" evidence="2">
    <location>
        <begin position="44"/>
        <end position="64"/>
    </location>
</feature>
<feature type="transmembrane region" description="Helical" evidence="2">
    <location>
        <begin position="97"/>
        <end position="117"/>
    </location>
</feature>
<feature type="transmembrane region" description="Helical" evidence="2">
    <location>
        <begin position="124"/>
        <end position="144"/>
    </location>
</feature>
<feature type="transmembrane region" description="Helical" evidence="2">
    <location>
        <begin position="163"/>
        <end position="183"/>
    </location>
</feature>
<feature type="transmembrane region" description="Helical" evidence="2">
    <location>
        <begin position="191"/>
        <end position="211"/>
    </location>
</feature>
<feature type="transmembrane region" description="Helical" evidence="2">
    <location>
        <begin position="245"/>
        <end position="265"/>
    </location>
</feature>
<feature type="transmembrane region" description="Helical" evidence="2">
    <location>
        <begin position="303"/>
        <end position="323"/>
    </location>
</feature>
<feature type="transmembrane region" description="Helical" evidence="2">
    <location>
        <begin position="338"/>
        <end position="358"/>
    </location>
</feature>
<feature type="transmembrane region" description="Helical" evidence="2">
    <location>
        <begin position="368"/>
        <end position="388"/>
    </location>
</feature>
<feature type="binding site" description="axial binding residue">
    <location>
        <position position="94"/>
    </location>
    <ligand>
        <name>heme b</name>
        <dbReference type="ChEBI" id="CHEBI:60344"/>
        <label>b562</label>
    </ligand>
    <ligandPart>
        <name>Fe</name>
        <dbReference type="ChEBI" id="CHEBI:18248"/>
    </ligandPart>
</feature>
<feature type="binding site" description="axial binding residue">
    <location>
        <position position="108"/>
    </location>
    <ligand>
        <name>heme b</name>
        <dbReference type="ChEBI" id="CHEBI:60344"/>
        <label>b566</label>
    </ligand>
    <ligandPart>
        <name>Fe</name>
        <dbReference type="ChEBI" id="CHEBI:18248"/>
    </ligandPart>
</feature>
<feature type="binding site" description="axial binding residue">
    <location>
        <position position="195"/>
    </location>
    <ligand>
        <name>heme b</name>
        <dbReference type="ChEBI" id="CHEBI:60344"/>
        <label>b562</label>
    </ligand>
    <ligandPart>
        <name>Fe</name>
        <dbReference type="ChEBI" id="CHEBI:18248"/>
    </ligandPart>
</feature>
<feature type="binding site" description="axial binding residue">
    <location>
        <position position="209"/>
    </location>
    <ligand>
        <name>heme b</name>
        <dbReference type="ChEBI" id="CHEBI:60344"/>
        <label>b566</label>
    </ligand>
    <ligandPart>
        <name>Fe</name>
        <dbReference type="ChEBI" id="CHEBI:18248"/>
    </ligandPart>
</feature>
<protein>
    <recommendedName>
        <fullName>Cytochrome b</fullName>
    </recommendedName>
</protein>
<dbReference type="EMBL" id="X55387">
    <property type="protein sequence ID" value="CAA39059.1"/>
    <property type="molecule type" value="Genomic_DNA"/>
</dbReference>
<dbReference type="PIR" id="S12257">
    <property type="entry name" value="CBQFR"/>
</dbReference>
<dbReference type="RefSeq" id="WP_011388116.1">
    <property type="nucleotide sequence ID" value="NZ_DAMDTZ010000027.1"/>
</dbReference>
<dbReference type="SMR" id="P23134"/>
<dbReference type="OMA" id="NISAWWN"/>
<dbReference type="GO" id="GO:0005886">
    <property type="term" value="C:plasma membrane"/>
    <property type="evidence" value="ECO:0007669"/>
    <property type="project" value="UniProtKB-SubCell"/>
</dbReference>
<dbReference type="GO" id="GO:0045275">
    <property type="term" value="C:respiratory chain complex III"/>
    <property type="evidence" value="ECO:0007669"/>
    <property type="project" value="InterPro"/>
</dbReference>
<dbReference type="GO" id="GO:0046872">
    <property type="term" value="F:metal ion binding"/>
    <property type="evidence" value="ECO:0007669"/>
    <property type="project" value="UniProtKB-KW"/>
</dbReference>
<dbReference type="GO" id="GO:0008121">
    <property type="term" value="F:ubiquinol-cytochrome-c reductase activity"/>
    <property type="evidence" value="ECO:0007669"/>
    <property type="project" value="InterPro"/>
</dbReference>
<dbReference type="GO" id="GO:0022904">
    <property type="term" value="P:respiratory electron transport chain"/>
    <property type="evidence" value="ECO:0007669"/>
    <property type="project" value="InterPro"/>
</dbReference>
<dbReference type="CDD" id="cd00290">
    <property type="entry name" value="cytochrome_b_C"/>
    <property type="match status" value="1"/>
</dbReference>
<dbReference type="CDD" id="cd00284">
    <property type="entry name" value="Cytochrome_b_N"/>
    <property type="match status" value="1"/>
</dbReference>
<dbReference type="FunFam" id="1.20.810.10:FF:000004">
    <property type="entry name" value="Cytochrome b"/>
    <property type="match status" value="1"/>
</dbReference>
<dbReference type="Gene3D" id="1.20.810.10">
    <property type="entry name" value="Cytochrome Bc1 Complex, Chain C"/>
    <property type="match status" value="1"/>
</dbReference>
<dbReference type="InterPro" id="IPR005798">
    <property type="entry name" value="Cyt_b/b6_C"/>
</dbReference>
<dbReference type="InterPro" id="IPR036150">
    <property type="entry name" value="Cyt_b/b6_C_sf"/>
</dbReference>
<dbReference type="InterPro" id="IPR005797">
    <property type="entry name" value="Cyt_b/b6_N"/>
</dbReference>
<dbReference type="InterPro" id="IPR027387">
    <property type="entry name" value="Cytb/b6-like_sf"/>
</dbReference>
<dbReference type="InterPro" id="IPR030689">
    <property type="entry name" value="Cytochrome_b"/>
</dbReference>
<dbReference type="InterPro" id="IPR048260">
    <property type="entry name" value="Cytochrome_b_C_euk/bac"/>
</dbReference>
<dbReference type="InterPro" id="IPR048259">
    <property type="entry name" value="Cytochrome_b_N_euk/bac"/>
</dbReference>
<dbReference type="InterPro" id="IPR016174">
    <property type="entry name" value="Di-haem_cyt_TM"/>
</dbReference>
<dbReference type="PANTHER" id="PTHR19271">
    <property type="entry name" value="CYTOCHROME B"/>
    <property type="match status" value="1"/>
</dbReference>
<dbReference type="PANTHER" id="PTHR19271:SF16">
    <property type="entry name" value="CYTOCHROME B"/>
    <property type="match status" value="1"/>
</dbReference>
<dbReference type="Pfam" id="PF00032">
    <property type="entry name" value="Cytochrom_B_C"/>
    <property type="match status" value="1"/>
</dbReference>
<dbReference type="Pfam" id="PF00033">
    <property type="entry name" value="Cytochrome_B"/>
    <property type="match status" value="1"/>
</dbReference>
<dbReference type="PIRSF" id="PIRSF038885">
    <property type="entry name" value="COB"/>
    <property type="match status" value="1"/>
</dbReference>
<dbReference type="SUPFAM" id="SSF81648">
    <property type="entry name" value="a domain/subunit of cytochrome bc1 complex (Ubiquinol-cytochrome c reductase)"/>
    <property type="match status" value="1"/>
</dbReference>
<dbReference type="SUPFAM" id="SSF81342">
    <property type="entry name" value="Transmembrane di-heme cytochromes"/>
    <property type="match status" value="1"/>
</dbReference>
<dbReference type="PROSITE" id="PS51003">
    <property type="entry name" value="CYTB_CTER"/>
    <property type="match status" value="1"/>
</dbReference>
<dbReference type="PROSITE" id="PS51002">
    <property type="entry name" value="CYTB_NTER"/>
    <property type="match status" value="1"/>
</dbReference>